<gene>
    <name evidence="13 15" type="primary">SUI2</name>
    <name type="synonym">TIF211</name>
    <name type="ordered locus">YJR007W</name>
    <name type="ORF">J1429</name>
</gene>
<reference key="1">
    <citation type="journal article" date="1989" name="Proc. Natl. Acad. Sci. U.S.A.">
        <title>Yeast translation initiation suppressor sui2 encodes the alpha subunit of eukaryotic initiation factor 2 and shares sequence identity with the human alpha subunit.</title>
        <authorList>
            <person name="Cigan A.M."/>
            <person name="Pabich E.K."/>
            <person name="Feng L."/>
            <person name="Donahue T.F."/>
        </authorList>
    </citation>
    <scope>NUCLEOTIDE SEQUENCE [GENOMIC DNA]</scope>
</reference>
<reference key="2">
    <citation type="journal article" date="1996" name="EMBO J.">
        <title>Complete nucleotide sequence of Saccharomyces cerevisiae chromosome X.</title>
        <authorList>
            <person name="Galibert F."/>
            <person name="Alexandraki D."/>
            <person name="Baur A."/>
            <person name="Boles E."/>
            <person name="Chalwatzis N."/>
            <person name="Chuat J.-C."/>
            <person name="Coster F."/>
            <person name="Cziepluch C."/>
            <person name="de Haan M."/>
            <person name="Domdey H."/>
            <person name="Durand P."/>
            <person name="Entian K.-D."/>
            <person name="Gatius M."/>
            <person name="Goffeau A."/>
            <person name="Grivell L.A."/>
            <person name="Hennemann A."/>
            <person name="Herbert C.J."/>
            <person name="Heumann K."/>
            <person name="Hilger F."/>
            <person name="Hollenberg C.P."/>
            <person name="Huang M.-E."/>
            <person name="Jacq C."/>
            <person name="Jauniaux J.-C."/>
            <person name="Katsoulou C."/>
            <person name="Kirchrath L."/>
            <person name="Kleine K."/>
            <person name="Kordes E."/>
            <person name="Koetter P."/>
            <person name="Liebl S."/>
            <person name="Louis E.J."/>
            <person name="Manus V."/>
            <person name="Mewes H.-W."/>
            <person name="Miosga T."/>
            <person name="Obermaier B."/>
            <person name="Perea J."/>
            <person name="Pohl T.M."/>
            <person name="Portetelle D."/>
            <person name="Pujol A."/>
            <person name="Purnelle B."/>
            <person name="Ramezani Rad M."/>
            <person name="Rasmussen S.W."/>
            <person name="Rose M."/>
            <person name="Rossau R."/>
            <person name="Schaaff-Gerstenschlaeger I."/>
            <person name="Smits P.H.M."/>
            <person name="Scarcez T."/>
            <person name="Soriano N."/>
            <person name="To Van D."/>
            <person name="Tzermia M."/>
            <person name="Van Broekhoven A."/>
            <person name="Vandenbol M."/>
            <person name="Wedler H."/>
            <person name="von Wettstein D."/>
            <person name="Wambutt R."/>
            <person name="Zagulski M."/>
            <person name="Zollner A."/>
            <person name="Karpfinger-Hartl L."/>
        </authorList>
    </citation>
    <scope>NUCLEOTIDE SEQUENCE [LARGE SCALE GENOMIC DNA]</scope>
    <source>
        <strain>ATCC 204508 / S288c</strain>
    </source>
</reference>
<reference key="3">
    <citation type="journal article" date="2014" name="G3 (Bethesda)">
        <title>The reference genome sequence of Saccharomyces cerevisiae: Then and now.</title>
        <authorList>
            <person name="Engel S.R."/>
            <person name="Dietrich F.S."/>
            <person name="Fisk D.G."/>
            <person name="Binkley G."/>
            <person name="Balakrishnan R."/>
            <person name="Costanzo M.C."/>
            <person name="Dwight S.S."/>
            <person name="Hitz B.C."/>
            <person name="Karra K."/>
            <person name="Nash R.S."/>
            <person name="Weng S."/>
            <person name="Wong E.D."/>
            <person name="Lloyd P."/>
            <person name="Skrzypek M.S."/>
            <person name="Miyasato S.R."/>
            <person name="Simison M."/>
            <person name="Cherry J.M."/>
        </authorList>
    </citation>
    <scope>GENOME REANNOTATION</scope>
    <source>
        <strain>ATCC 204508 / S288c</strain>
    </source>
</reference>
<reference key="4">
    <citation type="journal article" date="2007" name="Genome Res.">
        <title>Approaching a complete repository of sequence-verified protein-encoding clones for Saccharomyces cerevisiae.</title>
        <authorList>
            <person name="Hu Y."/>
            <person name="Rolfs A."/>
            <person name="Bhullar B."/>
            <person name="Murthy T.V.S."/>
            <person name="Zhu C."/>
            <person name="Berger M.F."/>
            <person name="Camargo A.A."/>
            <person name="Kelley F."/>
            <person name="McCarron S."/>
            <person name="Jepson D."/>
            <person name="Richardson A."/>
            <person name="Raphael J."/>
            <person name="Moreira D."/>
            <person name="Taycher E."/>
            <person name="Zuo D."/>
            <person name="Mohr S."/>
            <person name="Kane M.F."/>
            <person name="Williamson J."/>
            <person name="Simpson A.J.G."/>
            <person name="Bulyk M.L."/>
            <person name="Harlow E."/>
            <person name="Marsischky G."/>
            <person name="Kolodner R.D."/>
            <person name="LaBaer J."/>
        </authorList>
    </citation>
    <scope>NUCLEOTIDE SEQUENCE [GENOMIC DNA]</scope>
    <source>
        <strain>ATCC 204508 / S288c</strain>
    </source>
</reference>
<reference key="5">
    <citation type="journal article" date="1992" name="Cell">
        <title>Phosphorylation of initiation factor 2 alpha by protein kinase GCN2 mediates gene-specific translational control of GCN4 in yeast.</title>
        <authorList>
            <person name="Dever T.E."/>
            <person name="Feng L."/>
            <person name="Wek R.C."/>
            <person name="Cigan A.M."/>
            <person name="Donahue T.F."/>
            <person name="Hinnebusch A.G."/>
        </authorList>
    </citation>
    <scope>FUNCTION</scope>
    <scope>PHOSPHORYLATION AT SER-52 BY GCN2</scope>
    <scope>MUTAGENESIS OF SER-52</scope>
</reference>
<reference key="6">
    <citation type="journal article" date="1993" name="Mol. Cell. Biol.">
        <title>Translation of the yeast transcriptional activator GCN4 is stimulated by purine limitation: implications for activation of the protein kinase GCN2.</title>
        <authorList>
            <person name="Rolfes R.J."/>
            <person name="Hinnebusch A.G."/>
        </authorList>
    </citation>
    <scope>PHOSPHORYLATION AT SER-52 BY GCN2</scope>
</reference>
<reference key="7">
    <citation type="journal article" date="2000" name="Mol. Cell. Biol.">
        <title>Glucose limitation induces GCN4 translation by activation of Gcn2 protein kinase.</title>
        <authorList>
            <person name="Yang R."/>
            <person name="Wek S.A."/>
            <person name="Wek R.C."/>
        </authorList>
    </citation>
    <scope>PHOSPHORYLATION AT SER-52 DURING CARBON STARVATION</scope>
    <scope>MUTAGENESIS OF SER-52</scope>
</reference>
<reference key="8">
    <citation type="journal article" date="2003" name="Nature">
        <title>Global analysis of protein expression in yeast.</title>
        <authorList>
            <person name="Ghaemmaghami S."/>
            <person name="Huh W.-K."/>
            <person name="Bower K."/>
            <person name="Howson R.W."/>
            <person name="Belle A."/>
            <person name="Dephoure N."/>
            <person name="O'Shea E.K."/>
            <person name="Weissman J.S."/>
        </authorList>
    </citation>
    <scope>LEVEL OF PROTEIN EXPRESSION [LARGE SCALE ANALYSIS]</scope>
</reference>
<reference key="9">
    <citation type="journal article" date="2008" name="Mol. Cell. Proteomics">
        <title>A multidimensional chromatography technology for in-depth phosphoproteome analysis.</title>
        <authorList>
            <person name="Albuquerque C.P."/>
            <person name="Smolka M.B."/>
            <person name="Payne S.H."/>
            <person name="Bafna V."/>
            <person name="Eng J."/>
            <person name="Zhou H."/>
        </authorList>
    </citation>
    <scope>PHOSPHORYLATION [LARGE SCALE ANALYSIS] AT SER-292 AND SER-294</scope>
    <scope>IDENTIFICATION BY MASS SPECTROMETRY [LARGE SCALE ANALYSIS]</scope>
</reference>
<reference key="10">
    <citation type="journal article" date="2013" name="J. Biol. Chem.">
        <title>Translation initiation requires cell division cycle 123 (Cdc123) to facilitate biogenesis of the eukaryotic initiation factor 2 (eIF2).</title>
        <authorList>
            <person name="Perzlmaier A.F."/>
            <person name="Richter F."/>
            <person name="Seufert W."/>
        </authorList>
    </citation>
    <scope>IDENTIFICATION IN THE EIF2 COMPLEX</scope>
    <scope>INTERACTION WITH GCD1</scope>
</reference>
<reference key="11">
    <citation type="journal article" date="2019" name="Nucleic Acids Res.">
        <title>MEHMO syndrome mutation EIF2S3-I259M impairs initiator Met-tRNAiMet binding to eukaryotic translation initiation factor eIF2.</title>
        <authorList>
            <person name="Young-Baird S.K."/>
            <person name="Shin B.S."/>
            <person name="Dever T.E."/>
        </authorList>
    </citation>
    <scope>IDENTIFICATION IN THE EIF2 COMPLEX</scope>
</reference>
<reference key="12">
    <citation type="journal article" date="2022" name="J. Biol. Chem.">
        <title>Stepwise assembly of the eukaryotic translation initiation factor 2 complex.</title>
        <authorList>
            <person name="Vanselow S."/>
            <person name="Neumann-Arnold L."/>
            <person name="Wojciech-Moock F."/>
            <person name="Seufert W."/>
        </authorList>
    </citation>
    <scope>IDENTIFICATION IN THE EIF2 COMPLEX</scope>
    <scope>INTERACTION WITH CDC123</scope>
    <scope>MUTAGENESIS OF LEU-205 AND VAL-220</scope>
</reference>
<reference key="13">
    <citation type="journal article" date="2023" name="J. Struct. Biol.">
        <title>Binding of human Cdc123 to eIF2gamma.</title>
        <authorList>
            <person name="Cardenal Peralta C."/>
            <person name="Vandroux P."/>
            <person name="Neumann-Arnold L."/>
            <person name="Panvert M."/>
            <person name="Fagart J."/>
            <person name="Seufert W."/>
            <person name="Mechulam Y."/>
            <person name="Schmitt E."/>
        </authorList>
    </citation>
    <scope>INTERACTION WITH CDC123</scope>
</reference>
<reference key="14">
    <citation type="journal article" date="2003" name="J. Mol. Biol.">
        <title>The crystal structure of the N-terminal region of the alpha subunit of translation initiation factor 2 (eIF2alpha) from Saccharomyces cerevisiae provides a view of the loop containing serine 51, the target of the eIF2alpha-specific kinases.</title>
        <authorList>
            <person name="Dhaliwal S."/>
            <person name="Hoffman D.W."/>
        </authorList>
    </citation>
    <scope>X-RAY CRYSTALLOGRAPHY (2.86 ANGSTROMS) OF 2-176</scope>
</reference>
<reference key="15">
    <citation type="journal article" date="2005" name="Cell">
        <title>Higher-order substrate recognition of eIF2alpha by the RNA-dependent protein kinase PKR.</title>
        <authorList>
            <person name="Dar A.C."/>
            <person name="Dever T.E."/>
            <person name="Sicheri F."/>
        </authorList>
    </citation>
    <scope>X-RAY CRYSTALLOGRAPHY (2.8 ANGSTROMS) OF 4-176</scope>
</reference>
<reference evidence="16 17" key="16">
    <citation type="journal article" date="2019" name="Science">
        <title>Structural basis for eIF2B inhibition in integrated stress response.</title>
        <authorList>
            <person name="Kashiwagi K."/>
            <person name="Yokoyama T."/>
            <person name="Nishimoto M."/>
            <person name="Takahashi M."/>
            <person name="Sakamoto A."/>
            <person name="Yonemochi M."/>
            <person name="Shirouzu M."/>
            <person name="Ito T."/>
        </authorList>
    </citation>
    <scope>X-RAY CRYSTALLOGRAPHY (3.35 ANGSTROMS) IN COMPLEX WITH THE S.POMBE EIF2B COMPLEX</scope>
    <scope>PHOSPHORYLATION</scope>
    <scope>MUTAGENESIS OF ARG-64 AND LYS-87</scope>
</reference>
<accession>P20459</accession>
<accession>D6VWI2</accession>
<accession>E9P8T6</accession>
<evidence type="ECO:0000250" key="1">
    <source>
        <dbReference type="UniProtKB" id="P56286"/>
    </source>
</evidence>
<evidence type="ECO:0000255" key="2">
    <source>
        <dbReference type="PROSITE-ProRule" id="PRU00180"/>
    </source>
</evidence>
<evidence type="ECO:0000256" key="3">
    <source>
        <dbReference type="SAM" id="MobiDB-lite"/>
    </source>
</evidence>
<evidence type="ECO:0000269" key="4">
    <source>
    </source>
</evidence>
<evidence type="ECO:0000269" key="5">
    <source>
    </source>
</evidence>
<evidence type="ECO:0000269" key="6">
    <source>
    </source>
</evidence>
<evidence type="ECO:0000269" key="7">
    <source>
    </source>
</evidence>
<evidence type="ECO:0000269" key="8">
    <source>
    </source>
</evidence>
<evidence type="ECO:0000269" key="9">
    <source>
    </source>
</evidence>
<evidence type="ECO:0000269" key="10">
    <source>
    </source>
</evidence>
<evidence type="ECO:0000269" key="11">
    <source>
    </source>
</evidence>
<evidence type="ECO:0000269" key="12">
    <source>
    </source>
</evidence>
<evidence type="ECO:0000303" key="13">
    <source>
    </source>
</evidence>
<evidence type="ECO:0000305" key="14"/>
<evidence type="ECO:0000312" key="15">
    <source>
        <dbReference type="SGD" id="S000003767"/>
    </source>
</evidence>
<evidence type="ECO:0007744" key="16">
    <source>
        <dbReference type="PDB" id="6JLY"/>
    </source>
</evidence>
<evidence type="ECO:0007744" key="17">
    <source>
        <dbReference type="PDB" id="6JLZ"/>
    </source>
</evidence>
<evidence type="ECO:0007744" key="18">
    <source>
    </source>
</evidence>
<evidence type="ECO:0007829" key="19">
    <source>
        <dbReference type="PDB" id="1Q46"/>
    </source>
</evidence>
<evidence type="ECO:0007829" key="20">
    <source>
        <dbReference type="PDB" id="6JLZ"/>
    </source>
</evidence>
<evidence type="ECO:0007829" key="21">
    <source>
        <dbReference type="PDB" id="8CAS"/>
    </source>
</evidence>
<evidence type="ECO:0007829" key="22">
    <source>
        <dbReference type="PDB" id="8QEL"/>
    </source>
</evidence>
<evidence type="ECO:0007829" key="23">
    <source>
        <dbReference type="PDB" id="8RW1"/>
    </source>
</evidence>
<feature type="chain" id="PRO_0000137389" description="Eukaryotic translation initiation factor 2 subunit alpha">
    <location>
        <begin position="1"/>
        <end position="304"/>
    </location>
</feature>
<feature type="domain" description="S1 motif" evidence="2">
    <location>
        <begin position="17"/>
        <end position="88"/>
    </location>
</feature>
<feature type="region of interest" description="Disordered" evidence="3">
    <location>
        <begin position="283"/>
        <end position="304"/>
    </location>
</feature>
<feature type="compositionally biased region" description="Basic and acidic residues" evidence="3">
    <location>
        <begin position="284"/>
        <end position="293"/>
    </location>
</feature>
<feature type="compositionally biased region" description="Acidic residues" evidence="3">
    <location>
        <begin position="294"/>
        <end position="304"/>
    </location>
</feature>
<feature type="modified residue" description="Phosphoserine; by GCN2" evidence="4 6 12">
    <location>
        <position position="52"/>
    </location>
</feature>
<feature type="modified residue" description="Phosphoserine" evidence="18">
    <location>
        <position position="292"/>
    </location>
</feature>
<feature type="modified residue" description="Phosphoserine" evidence="18">
    <location>
        <position position="294"/>
    </location>
</feature>
<feature type="mutagenesis site" description="Inhibits derepression of GCN4 expression in amino acid, purine, and glucose-starved cells." evidence="4 6">
    <original>S</original>
    <variation>A</variation>
    <location>
        <position position="52"/>
    </location>
</feature>
<feature type="mutagenesis site" description="Weakly impairs derepression of GCN4 expression in amino acid-starved cells." evidence="6">
    <original>S</original>
    <variation>D</variation>
    <location>
        <position position="52"/>
    </location>
</feature>
<feature type="mutagenesis site" description="Alters the binding mode to the eIF2B complex; when associated with A-87." evidence="9">
    <original>R</original>
    <variation>A</variation>
    <location>
        <position position="64"/>
    </location>
</feature>
<feature type="mutagenesis site" description="Alters the binding mode to the eIF2B complex; when associated with A-64." evidence="9">
    <original>K</original>
    <variation>A</variation>
    <location>
        <position position="87"/>
    </location>
</feature>
<feature type="mutagenesis site" description="Abolishes binding to the eIF2 complex alpha subunit GCD11." evidence="10">
    <original>L</original>
    <variation>E</variation>
    <location>
        <position position="205"/>
    </location>
</feature>
<feature type="mutagenesis site" description="Abolishes binding to the eIF2 complex alpha subunit GCD11. Does not affect its interaction with CDC123." evidence="10">
    <original>V</original>
    <variation>E</variation>
    <location>
        <position position="220"/>
    </location>
</feature>
<feature type="sequence conflict" description="In Ref. 4; AAS56202." evidence="14" ref="4">
    <original>Y</original>
    <variation>H</variation>
    <location>
        <position position="258"/>
    </location>
</feature>
<feature type="strand" evidence="22">
    <location>
        <begin position="8"/>
        <end position="13"/>
    </location>
</feature>
<feature type="strand" evidence="22">
    <location>
        <begin position="19"/>
        <end position="27"/>
    </location>
</feature>
<feature type="strand" evidence="22">
    <location>
        <begin position="29"/>
        <end position="36"/>
    </location>
</feature>
<feature type="turn" evidence="22">
    <location>
        <begin position="37"/>
        <end position="41"/>
    </location>
</feature>
<feature type="strand" evidence="22">
    <location>
        <begin position="43"/>
        <end position="47"/>
    </location>
</feature>
<feature type="helix" evidence="19">
    <location>
        <begin position="48"/>
        <end position="50"/>
    </location>
</feature>
<feature type="strand" evidence="20">
    <location>
        <begin position="56"/>
        <end position="58"/>
    </location>
</feature>
<feature type="helix" evidence="19">
    <location>
        <begin position="59"/>
        <end position="61"/>
    </location>
</feature>
<feature type="strand" evidence="22">
    <location>
        <begin position="67"/>
        <end position="77"/>
    </location>
</feature>
<feature type="turn" evidence="22">
    <location>
        <begin position="78"/>
        <end position="81"/>
    </location>
</feature>
<feature type="strand" evidence="22">
    <location>
        <begin position="82"/>
        <end position="87"/>
    </location>
</feature>
<feature type="helix" evidence="22">
    <location>
        <begin position="92"/>
        <end position="118"/>
    </location>
</feature>
<feature type="helix" evidence="22">
    <location>
        <begin position="123"/>
        <end position="129"/>
    </location>
</feature>
<feature type="helix" evidence="22">
    <location>
        <begin position="131"/>
        <end position="138"/>
    </location>
</feature>
<feature type="helix" evidence="22">
    <location>
        <begin position="141"/>
        <end position="148"/>
    </location>
</feature>
<feature type="helix" evidence="22">
    <location>
        <begin position="152"/>
        <end position="155"/>
    </location>
</feature>
<feature type="helix" evidence="22">
    <location>
        <begin position="163"/>
        <end position="173"/>
    </location>
</feature>
<feature type="strand" evidence="21">
    <location>
        <begin position="183"/>
        <end position="190"/>
    </location>
</feature>
<feature type="helix" evidence="21">
    <location>
        <begin position="198"/>
        <end position="208"/>
    </location>
</feature>
<feature type="strand" evidence="23">
    <location>
        <begin position="214"/>
        <end position="216"/>
    </location>
</feature>
<feature type="strand" evidence="21">
    <location>
        <begin position="220"/>
        <end position="233"/>
    </location>
</feature>
<feature type="strand" evidence="21">
    <location>
        <begin position="235"/>
        <end position="239"/>
    </location>
</feature>
<feature type="helix" evidence="21">
    <location>
        <begin position="240"/>
        <end position="258"/>
    </location>
</feature>
<feature type="strand" evidence="23">
    <location>
        <begin position="262"/>
        <end position="269"/>
    </location>
</feature>
<dbReference type="EMBL" id="M25552">
    <property type="protein sequence ID" value="AAA70332.1"/>
    <property type="molecule type" value="Genomic_DNA"/>
</dbReference>
<dbReference type="EMBL" id="X87611">
    <property type="protein sequence ID" value="CAA60929.1"/>
    <property type="molecule type" value="Genomic_DNA"/>
</dbReference>
<dbReference type="EMBL" id="Z49507">
    <property type="protein sequence ID" value="CAA89529.1"/>
    <property type="molecule type" value="Genomic_DNA"/>
</dbReference>
<dbReference type="EMBL" id="AY557876">
    <property type="protein sequence ID" value="AAS56202.1"/>
    <property type="molecule type" value="Genomic_DNA"/>
</dbReference>
<dbReference type="EMBL" id="BK006943">
    <property type="protein sequence ID" value="DAA08798.1"/>
    <property type="molecule type" value="Genomic_DNA"/>
</dbReference>
<dbReference type="PIR" id="A32108">
    <property type="entry name" value="A32108"/>
</dbReference>
<dbReference type="RefSeq" id="NP_012540.3">
    <property type="nucleotide sequence ID" value="NM_001181664.3"/>
</dbReference>
<dbReference type="PDB" id="1Q46">
    <property type="method" value="X-ray"/>
    <property type="resolution" value="2.86 A"/>
    <property type="chains" value="A=2-176"/>
</dbReference>
<dbReference type="PDB" id="2A19">
    <property type="method" value="X-ray"/>
    <property type="resolution" value="2.50 A"/>
    <property type="chains" value="A=4-176"/>
</dbReference>
<dbReference type="PDB" id="2A1A">
    <property type="method" value="X-ray"/>
    <property type="resolution" value="2.80 A"/>
    <property type="chains" value="A=4-176"/>
</dbReference>
<dbReference type="PDB" id="3J81">
    <property type="method" value="EM"/>
    <property type="resolution" value="4.00 A"/>
    <property type="chains" value="j=1-300"/>
</dbReference>
<dbReference type="PDB" id="3JAP">
    <property type="method" value="EM"/>
    <property type="resolution" value="4.90 A"/>
    <property type="chains" value="j=1-304"/>
</dbReference>
<dbReference type="PDB" id="6FYX">
    <property type="method" value="EM"/>
    <property type="resolution" value="3.05 A"/>
    <property type="chains" value="j=1-304"/>
</dbReference>
<dbReference type="PDB" id="6FYY">
    <property type="method" value="EM"/>
    <property type="resolution" value="3.05 A"/>
    <property type="chains" value="j=1-304"/>
</dbReference>
<dbReference type="PDB" id="6GSM">
    <property type="method" value="EM"/>
    <property type="resolution" value="5.15 A"/>
    <property type="chains" value="j=3-265"/>
</dbReference>
<dbReference type="PDB" id="6GSN">
    <property type="method" value="EM"/>
    <property type="resolution" value="5.75 A"/>
    <property type="chains" value="j=3-265"/>
</dbReference>
<dbReference type="PDB" id="6I3M">
    <property type="method" value="EM"/>
    <property type="resolution" value="3.93 A"/>
    <property type="chains" value="K/L=1-304"/>
</dbReference>
<dbReference type="PDB" id="6I7T">
    <property type="method" value="EM"/>
    <property type="resolution" value="4.61 A"/>
    <property type="chains" value="K/L=1-304"/>
</dbReference>
<dbReference type="PDB" id="6JLY">
    <property type="method" value="X-ray"/>
    <property type="resolution" value="3.50 A"/>
    <property type="chains" value="L/M=1-304"/>
</dbReference>
<dbReference type="PDB" id="6JLZ">
    <property type="method" value="X-ray"/>
    <property type="resolution" value="3.35 A"/>
    <property type="chains" value="L/M=1-304"/>
</dbReference>
<dbReference type="PDB" id="6QG0">
    <property type="method" value="EM"/>
    <property type="resolution" value="4.20 A"/>
    <property type="chains" value="K/L=1-304"/>
</dbReference>
<dbReference type="PDB" id="6QG1">
    <property type="method" value="EM"/>
    <property type="resolution" value="4.20 A"/>
    <property type="chains" value="K/L=1-304"/>
</dbReference>
<dbReference type="PDB" id="6QG2">
    <property type="method" value="EM"/>
    <property type="resolution" value="4.60 A"/>
    <property type="chains" value="K/L=1-304"/>
</dbReference>
<dbReference type="PDB" id="6QG3">
    <property type="method" value="EM"/>
    <property type="resolution" value="9.40 A"/>
    <property type="chains" value="K/L=1-304"/>
</dbReference>
<dbReference type="PDB" id="6QG5">
    <property type="method" value="EM"/>
    <property type="resolution" value="10.10 A"/>
    <property type="chains" value="K/L=1-304"/>
</dbReference>
<dbReference type="PDB" id="6QG6">
    <property type="method" value="EM"/>
    <property type="resolution" value="4.65 A"/>
    <property type="chains" value="K/L=1-304"/>
</dbReference>
<dbReference type="PDB" id="8CAS">
    <property type="method" value="EM"/>
    <property type="resolution" value="3.30 A"/>
    <property type="chains" value="j=1-304"/>
</dbReference>
<dbReference type="PDB" id="8QEL">
    <property type="method" value="X-ray"/>
    <property type="resolution" value="2.45 A"/>
    <property type="chains" value="A=4-176"/>
</dbReference>
<dbReference type="PDB" id="8RW1">
    <property type="method" value="EM"/>
    <property type="resolution" value="3.35 A"/>
    <property type="chains" value="j=1-304"/>
</dbReference>
<dbReference type="PDB" id="8S8D">
    <property type="method" value="EM"/>
    <property type="resolution" value="3.45 A"/>
    <property type="chains" value="j=1-304"/>
</dbReference>
<dbReference type="PDB" id="8S8E">
    <property type="method" value="EM"/>
    <property type="resolution" value="3.85 A"/>
    <property type="chains" value="j=1-304"/>
</dbReference>
<dbReference type="PDB" id="8S8F">
    <property type="method" value="EM"/>
    <property type="resolution" value="3.95 A"/>
    <property type="chains" value="j=1-304"/>
</dbReference>
<dbReference type="PDB" id="8S8G">
    <property type="method" value="EM"/>
    <property type="resolution" value="4.00 A"/>
    <property type="chains" value="j=1-304"/>
</dbReference>
<dbReference type="PDB" id="8S8H">
    <property type="method" value="EM"/>
    <property type="resolution" value="4.00 A"/>
    <property type="chains" value="j=1-304"/>
</dbReference>
<dbReference type="PDB" id="8S8I">
    <property type="method" value="EM"/>
    <property type="resolution" value="4.30 A"/>
    <property type="chains" value="j=1-304"/>
</dbReference>
<dbReference type="PDB" id="8S8J">
    <property type="method" value="EM"/>
    <property type="resolution" value="4.70 A"/>
    <property type="chains" value="j=1-304"/>
</dbReference>
<dbReference type="PDB" id="8S8K">
    <property type="method" value="EM"/>
    <property type="resolution" value="4.00 A"/>
    <property type="chains" value="j=1-304"/>
</dbReference>
<dbReference type="PDBsum" id="1Q46"/>
<dbReference type="PDBsum" id="2A19"/>
<dbReference type="PDBsum" id="2A1A"/>
<dbReference type="PDBsum" id="3J81"/>
<dbReference type="PDBsum" id="3JAP"/>
<dbReference type="PDBsum" id="6FYX"/>
<dbReference type="PDBsum" id="6FYY"/>
<dbReference type="PDBsum" id="6GSM"/>
<dbReference type="PDBsum" id="6GSN"/>
<dbReference type="PDBsum" id="6I3M"/>
<dbReference type="PDBsum" id="6I7T"/>
<dbReference type="PDBsum" id="6JLY"/>
<dbReference type="PDBsum" id="6JLZ"/>
<dbReference type="PDBsum" id="6QG0"/>
<dbReference type="PDBsum" id="6QG1"/>
<dbReference type="PDBsum" id="6QG2"/>
<dbReference type="PDBsum" id="6QG3"/>
<dbReference type="PDBsum" id="6QG5"/>
<dbReference type="PDBsum" id="6QG6"/>
<dbReference type="PDBsum" id="8CAS"/>
<dbReference type="PDBsum" id="8QEL"/>
<dbReference type="PDBsum" id="8RW1"/>
<dbReference type="PDBsum" id="8S8D"/>
<dbReference type="PDBsum" id="8S8E"/>
<dbReference type="PDBsum" id="8S8F"/>
<dbReference type="PDBsum" id="8S8G"/>
<dbReference type="PDBsum" id="8S8H"/>
<dbReference type="PDBsum" id="8S8I"/>
<dbReference type="PDBsum" id="8S8J"/>
<dbReference type="PDBsum" id="8S8K"/>
<dbReference type="EMDB" id="EMD-0057"/>
<dbReference type="EMDB" id="EMD-0058"/>
<dbReference type="EMDB" id="EMD-19541"/>
<dbReference type="EMDB" id="EMD-19801"/>
<dbReference type="EMDB" id="EMD-19802"/>
<dbReference type="EMDB" id="EMD-19803"/>
<dbReference type="EMDB" id="EMD-19804"/>
<dbReference type="EMDB" id="EMD-19805"/>
<dbReference type="EMDB" id="EMD-19806"/>
<dbReference type="EMDB" id="EMD-19807"/>
<dbReference type="EMDB" id="EMD-19808"/>
<dbReference type="EMDB" id="EMD-4327"/>
<dbReference type="EMDB" id="EMD-4328"/>
<dbReference type="EMDB" id="EMD-4404"/>
<dbReference type="EMDB" id="EMD-4428"/>
<dbReference type="EMDB" id="EMD-4543"/>
<dbReference type="EMDB" id="EMD-4544"/>
<dbReference type="EMDB" id="EMD-4545"/>
<dbReference type="EMDB" id="EMD-4546"/>
<dbReference type="EMDB" id="EMD-4547"/>
<dbReference type="EMDB" id="EMD-4548"/>
<dbReference type="SMR" id="P20459"/>
<dbReference type="BioGRID" id="33763">
    <property type="interactions" value="343"/>
</dbReference>
<dbReference type="ComplexPortal" id="CPX-427">
    <property type="entry name" value="Eukaryotic translation initiation factor 2 complex"/>
</dbReference>
<dbReference type="DIP" id="DIP-2327N"/>
<dbReference type="FunCoup" id="P20459">
    <property type="interactions" value="1602"/>
</dbReference>
<dbReference type="IntAct" id="P20459">
    <property type="interactions" value="49"/>
</dbReference>
<dbReference type="MINT" id="P20459"/>
<dbReference type="STRING" id="4932.YJR007W"/>
<dbReference type="iPTMnet" id="P20459"/>
<dbReference type="PaxDb" id="4932-YJR007W"/>
<dbReference type="PeptideAtlas" id="P20459"/>
<dbReference type="EnsemblFungi" id="YJR007W_mRNA">
    <property type="protein sequence ID" value="YJR007W"/>
    <property type="gene ID" value="YJR007W"/>
</dbReference>
<dbReference type="GeneID" id="853463"/>
<dbReference type="KEGG" id="sce:YJR007W"/>
<dbReference type="AGR" id="SGD:S000003767"/>
<dbReference type="SGD" id="S000003767">
    <property type="gene designation" value="SUI2"/>
</dbReference>
<dbReference type="VEuPathDB" id="FungiDB:YJR007W"/>
<dbReference type="eggNOG" id="KOG2916">
    <property type="taxonomic scope" value="Eukaryota"/>
</dbReference>
<dbReference type="GeneTree" id="ENSGT00390000007015"/>
<dbReference type="HOGENOM" id="CLU_033458_0_1_1"/>
<dbReference type="InParanoid" id="P20459"/>
<dbReference type="OMA" id="DVNEHQR"/>
<dbReference type="OrthoDB" id="1685042at2759"/>
<dbReference type="BioCyc" id="YEAST:G3O-31653-MONOMER"/>
<dbReference type="Reactome" id="R-SCE-156827">
    <property type="pathway name" value="L13a-mediated translational silencing of Ceruloplasmin expression"/>
</dbReference>
<dbReference type="Reactome" id="R-SCE-382556">
    <property type="pathway name" value="ABC-family proteins mediated transport"/>
</dbReference>
<dbReference type="Reactome" id="R-SCE-72649">
    <property type="pathway name" value="Translation initiation complex formation"/>
</dbReference>
<dbReference type="Reactome" id="R-SCE-72695">
    <property type="pathway name" value="Formation of the ternary complex, and subsequently, the 43S complex"/>
</dbReference>
<dbReference type="Reactome" id="R-SCE-72702">
    <property type="pathway name" value="Ribosomal scanning and start codon recognition"/>
</dbReference>
<dbReference type="Reactome" id="R-SCE-72731">
    <property type="pathway name" value="Recycling of eIF2:GDP"/>
</dbReference>
<dbReference type="Reactome" id="R-SCE-9840373">
    <property type="pathway name" value="Cellular response to mitochondrial stress"/>
</dbReference>
<dbReference type="BioGRID-ORCS" id="853463">
    <property type="hits" value="0 hits in 10 CRISPR screens"/>
</dbReference>
<dbReference type="CD-CODE" id="E03F929F">
    <property type="entry name" value="Stress granule"/>
</dbReference>
<dbReference type="EvolutionaryTrace" id="P20459"/>
<dbReference type="PRO" id="PR:P20459"/>
<dbReference type="Proteomes" id="UP000002311">
    <property type="component" value="Chromosome X"/>
</dbReference>
<dbReference type="RNAct" id="P20459">
    <property type="molecule type" value="protein"/>
</dbReference>
<dbReference type="GO" id="GO:0005737">
    <property type="term" value="C:cytoplasm"/>
    <property type="evidence" value="ECO:0007005"/>
    <property type="project" value="SGD"/>
</dbReference>
<dbReference type="GO" id="GO:0010494">
    <property type="term" value="C:cytoplasmic stress granule"/>
    <property type="evidence" value="ECO:0007005"/>
    <property type="project" value="SGD"/>
</dbReference>
<dbReference type="GO" id="GO:0005829">
    <property type="term" value="C:cytosol"/>
    <property type="evidence" value="ECO:0000304"/>
    <property type="project" value="Reactome"/>
</dbReference>
<dbReference type="GO" id="GO:0033290">
    <property type="term" value="C:eukaryotic 48S preinitiation complex"/>
    <property type="evidence" value="ECO:0000314"/>
    <property type="project" value="SGD"/>
</dbReference>
<dbReference type="GO" id="GO:0005850">
    <property type="term" value="C:eukaryotic translation initiation factor 2 complex"/>
    <property type="evidence" value="ECO:0000315"/>
    <property type="project" value="SGD"/>
</dbReference>
<dbReference type="GO" id="GO:0043614">
    <property type="term" value="C:multi-eIF complex"/>
    <property type="evidence" value="ECO:0000314"/>
    <property type="project" value="SGD"/>
</dbReference>
<dbReference type="GO" id="GO:0005840">
    <property type="term" value="C:ribosome"/>
    <property type="evidence" value="ECO:0000314"/>
    <property type="project" value="ComplexPortal"/>
</dbReference>
<dbReference type="GO" id="GO:0043022">
    <property type="term" value="F:ribosome binding"/>
    <property type="evidence" value="ECO:0000318"/>
    <property type="project" value="GO_Central"/>
</dbReference>
<dbReference type="GO" id="GO:0003723">
    <property type="term" value="F:RNA binding"/>
    <property type="evidence" value="ECO:0007669"/>
    <property type="project" value="UniProtKB-KW"/>
</dbReference>
<dbReference type="GO" id="GO:0003743">
    <property type="term" value="F:translation initiation factor activity"/>
    <property type="evidence" value="ECO:0000318"/>
    <property type="project" value="GO_Central"/>
</dbReference>
<dbReference type="GO" id="GO:0001731">
    <property type="term" value="P:formation of translation preinitiation complex"/>
    <property type="evidence" value="ECO:0000314"/>
    <property type="project" value="SGD"/>
</dbReference>
<dbReference type="GO" id="GO:0006413">
    <property type="term" value="P:translational initiation"/>
    <property type="evidence" value="ECO:0000314"/>
    <property type="project" value="ComplexPortal"/>
</dbReference>
<dbReference type="CDD" id="cd04452">
    <property type="entry name" value="S1_IF2_alpha"/>
    <property type="match status" value="1"/>
</dbReference>
<dbReference type="FunFam" id="3.30.70.1130:FF:000001">
    <property type="entry name" value="Eukaryotic translation initiation factor 2 subunit 1"/>
    <property type="match status" value="1"/>
</dbReference>
<dbReference type="FunFam" id="2.40.50.140:FF:000015">
    <property type="entry name" value="Eukaryotic translation initiation factor 2 subunit alpha"/>
    <property type="match status" value="1"/>
</dbReference>
<dbReference type="FunFam" id="1.10.150.190:FF:000002">
    <property type="entry name" value="Translation initiation factor 2, alpha subunit"/>
    <property type="match status" value="1"/>
</dbReference>
<dbReference type="Gene3D" id="3.30.70.1130">
    <property type="entry name" value="EIF_2_alpha"/>
    <property type="match status" value="1"/>
</dbReference>
<dbReference type="Gene3D" id="2.40.50.140">
    <property type="entry name" value="Nucleic acid-binding proteins"/>
    <property type="match status" value="1"/>
</dbReference>
<dbReference type="Gene3D" id="1.10.150.190">
    <property type="entry name" value="Translation initiation factor 2, subunit 1, domain 2"/>
    <property type="match status" value="1"/>
</dbReference>
<dbReference type="IDEAL" id="IID50184"/>
<dbReference type="InterPro" id="IPR012340">
    <property type="entry name" value="NA-bd_OB-fold"/>
</dbReference>
<dbReference type="InterPro" id="IPR003029">
    <property type="entry name" value="S1_domain"/>
</dbReference>
<dbReference type="InterPro" id="IPR044126">
    <property type="entry name" value="S1_IF2_alpha"/>
</dbReference>
<dbReference type="InterPro" id="IPR024055">
    <property type="entry name" value="TIF2_asu_C"/>
</dbReference>
<dbReference type="InterPro" id="IPR024054">
    <property type="entry name" value="TIF2_asu_middle_sf"/>
</dbReference>
<dbReference type="InterPro" id="IPR011488">
    <property type="entry name" value="TIF_2_asu"/>
</dbReference>
<dbReference type="PANTHER" id="PTHR10602">
    <property type="entry name" value="EUKARYOTIC TRANSLATION INITIATION FACTOR 2 SUBUNIT 1"/>
    <property type="match status" value="1"/>
</dbReference>
<dbReference type="PANTHER" id="PTHR10602:SF0">
    <property type="entry name" value="EUKARYOTIC TRANSLATION INITIATION FACTOR 2 SUBUNIT 1"/>
    <property type="match status" value="1"/>
</dbReference>
<dbReference type="Pfam" id="PF07541">
    <property type="entry name" value="EIF_2_alpha"/>
    <property type="match status" value="1"/>
</dbReference>
<dbReference type="Pfam" id="PF00575">
    <property type="entry name" value="S1"/>
    <property type="match status" value="1"/>
</dbReference>
<dbReference type="SMART" id="SM00316">
    <property type="entry name" value="S1"/>
    <property type="match status" value="1"/>
</dbReference>
<dbReference type="SUPFAM" id="SSF110993">
    <property type="entry name" value="eIF-2-alpha, C-terminal domain"/>
    <property type="match status" value="1"/>
</dbReference>
<dbReference type="SUPFAM" id="SSF116742">
    <property type="entry name" value="eIF2alpha middle domain-like"/>
    <property type="match status" value="1"/>
</dbReference>
<dbReference type="SUPFAM" id="SSF50249">
    <property type="entry name" value="Nucleic acid-binding proteins"/>
    <property type="match status" value="1"/>
</dbReference>
<dbReference type="PROSITE" id="PS50126">
    <property type="entry name" value="S1"/>
    <property type="match status" value="1"/>
</dbReference>
<keyword id="KW-0002">3D-structure</keyword>
<keyword id="KW-0963">Cytoplasm</keyword>
<keyword id="KW-0396">Initiation factor</keyword>
<keyword id="KW-0597">Phosphoprotein</keyword>
<keyword id="KW-0648">Protein biosynthesis</keyword>
<keyword id="KW-1185">Reference proteome</keyword>
<keyword id="KW-0694">RNA-binding</keyword>
<name>IF2A_YEAST</name>
<proteinExistence type="evidence at protein level"/>
<sequence length="304" mass="34718">MSTSHCRFYENKYPEIDDIVMVNVQQIAEMGAYVKLLEYDNIEGMILLSELSRRRIRSIQKLIRVGKNDVAVVLRVDKEKGYIDLSKRRVSSEDIIKCEEKYQKSKTVHSILRYCAEKFQIPLEELYKTIAWPLSRKFGHAYEAFKLSIIDETVWEGIEPPSKDVLDELKNYISKRLTPQAVKIRADVEVSCFSYEGIDAIKDALKSAEDMSTEQMQVKVKLVAAPLYVLTTQALDKQKGIEQLESAIEKITEVITKYGGVCNITMPPKAVTATEDAELQALLESKELDNRSDSEDDEDESDDE</sequence>
<comment type="function">
    <text evidence="14">eIF-2 functions in the early steps of protein synthesis by forming a ternary complex with GTP and initiator tRNA. This complex binds to a 40S ribosomal subunit, followed by mRNA binding to form a 43S pre-initiation complex. Junction of the 60S ribosomal subunit to form the 80S initiation complex is preceded by hydrolysis of the GTP bound to eIF-2 and release of an eIF-2-GDP binary complex. In order for eIF-2 to recycle and catalyze another round of initiation, the GDP bound to eIF-2 must exchange with GTP by way of a reaction catalyzed by eIF2B.</text>
</comment>
<comment type="subunit">
    <text evidence="7 8 10 11 14">Eukaryotic translation initiation factor 2 eIF2 is a heterotrimeric complex composed of an alpha, a beta and a gamma subunit (PubMed:23775072, PubMed:30517694, PubMed:35031321). The factors eIF-1, eIF-2, eIF-3, TIF5/eIF-5 and methionyl-tRNAi form a multifactor complex (MFC) that may bind to the 40S ribosome (Probable). Interacts with CDC123; the interaction is direct (PubMed:35031321, PubMed:37507029). Interacts with GCD1 (PubMed:23775072).</text>
</comment>
<comment type="interaction">
    <interactant intactId="EBI-8915">
        <id>P20459</id>
    </interactant>
    <interactant intactId="EBI-8924">
        <id>P32481</id>
        <label>GCD11</label>
    </interactant>
    <organismsDiffer>false</organismsDiffer>
    <experiments>12</experiments>
</comment>
<comment type="interaction">
    <interactant intactId="EBI-8915">
        <id>P20459</id>
    </interactant>
    <interactant intactId="EBI-9038">
        <id>P38431</id>
        <label>TIF5</label>
    </interactant>
    <organismsDiffer>false</organismsDiffer>
    <experiments>5</experiments>
</comment>
<comment type="interaction">
    <interactant intactId="EBI-8915">
        <id>P20459</id>
    </interactant>
    <interactant intactId="EBI-2808248">
        <id>O75794</id>
        <label>CDC123</label>
    </interactant>
    <organismsDiffer>true</organismsDiffer>
    <experiments>2</experiments>
</comment>
<comment type="subcellular location">
    <subcellularLocation>
        <location evidence="1">Cytoplasm</location>
        <location evidence="1">Cytosol</location>
    </subcellularLocation>
</comment>
<comment type="PTM">
    <text evidence="4 6 9 12">Phosphorylated; phosphorylation on Ser-52 by the GCN2 protein kinase occurs in response to low amino acid, carbon, or purine availability (PubMed:10733573, PubMed:1739968, PubMed:8336737). Phosphorylation inhibits the guanine nucleotide exchange factor activity of the eIF2B complex (PubMed:31048492).</text>
</comment>
<comment type="miscellaneous">
    <text evidence="5">Present with 17100 molecules/cell in log phase SD medium.</text>
</comment>
<comment type="similarity">
    <text evidence="14">Belongs to the eIF-2-alpha family.</text>
</comment>
<protein>
    <recommendedName>
        <fullName>Eukaryotic translation initiation factor 2 subunit alpha</fullName>
        <shortName>eIF-2-alpha</shortName>
        <shortName>eIF-2A</shortName>
        <shortName>eIF-2alpha</shortName>
        <shortName>eIF2-alpha</shortName>
    </recommendedName>
</protein>
<organism>
    <name type="scientific">Saccharomyces cerevisiae (strain ATCC 204508 / S288c)</name>
    <name type="common">Baker's yeast</name>
    <dbReference type="NCBI Taxonomy" id="559292"/>
    <lineage>
        <taxon>Eukaryota</taxon>
        <taxon>Fungi</taxon>
        <taxon>Dikarya</taxon>
        <taxon>Ascomycota</taxon>
        <taxon>Saccharomycotina</taxon>
        <taxon>Saccharomycetes</taxon>
        <taxon>Saccharomycetales</taxon>
        <taxon>Saccharomycetaceae</taxon>
        <taxon>Saccharomyces</taxon>
    </lineage>
</organism>